<reference key="1">
    <citation type="submission" date="2003-09" db="EMBL/GenBank/DDBJ databases">
        <authorList>
            <consortium name="NIH - Zebrafish Gene Collection (ZGC) project"/>
        </authorList>
    </citation>
    <scope>NUCLEOTIDE SEQUENCE [LARGE SCALE MRNA]</scope>
    <source>
        <tissue>Kidney</tissue>
    </source>
</reference>
<comment type="function">
    <text evidence="1 2">Regulates cell junction organization in epithelial cells.</text>
</comment>
<comment type="subcellular location">
    <subcellularLocation>
        <location evidence="4">Membrane</location>
        <topology evidence="4">Multi-pass membrane protein</topology>
    </subcellularLocation>
    <subcellularLocation>
        <location evidence="2">Cell junction</location>
        <location evidence="2">Adherens junction</location>
    </subcellularLocation>
</comment>
<comment type="similarity">
    <text evidence="4">Belongs to the TMEM47 family.</text>
</comment>
<accession>Q6PFT6</accession>
<feature type="chain" id="PRO_0000072571" description="Transmembrane protein 47">
    <location>
        <begin position="1"/>
        <end position="181"/>
    </location>
</feature>
<feature type="transmembrane region" description="Helical" evidence="3">
    <location>
        <begin position="21"/>
        <end position="41"/>
    </location>
</feature>
<feature type="transmembrane region" description="Helical" evidence="3">
    <location>
        <begin position="81"/>
        <end position="101"/>
    </location>
</feature>
<feature type="transmembrane region" description="Helical" evidence="3">
    <location>
        <begin position="115"/>
        <end position="135"/>
    </location>
</feature>
<feature type="transmembrane region" description="Helical" evidence="3">
    <location>
        <begin position="152"/>
        <end position="172"/>
    </location>
</feature>
<sequence>MASSVSGAEEVRVSALTPLKLVGLVCVFLALCLDVGAVLSPAWVTADDQYHLSLWKSCSKPAASATWRCNSTLGTDWQIATLALLLGGAFLILLSFLVALVSVCIRSRRRFYRPVAIMLFAAVVLQACCLVLYPIKFIETISLRIYHEFNWGYGLAWGATIFSFGGAILYCLNPKNYEDYY</sequence>
<proteinExistence type="evidence at transcript level"/>
<keyword id="KW-0965">Cell junction</keyword>
<keyword id="KW-0472">Membrane</keyword>
<keyword id="KW-1185">Reference proteome</keyword>
<keyword id="KW-0812">Transmembrane</keyword>
<keyword id="KW-1133">Transmembrane helix</keyword>
<dbReference type="EMBL" id="BC057424">
    <property type="protein sequence ID" value="AAH57424.1"/>
    <property type="molecule type" value="mRNA"/>
</dbReference>
<dbReference type="RefSeq" id="NP_999928.1">
    <property type="nucleotide sequence ID" value="NM_214763.2"/>
</dbReference>
<dbReference type="SMR" id="Q6PFT6"/>
<dbReference type="FunCoup" id="Q6PFT6">
    <property type="interactions" value="960"/>
</dbReference>
<dbReference type="STRING" id="7955.ENSDARP00000104833"/>
<dbReference type="PaxDb" id="7955-ENSDARP00000104833"/>
<dbReference type="Ensembl" id="ENSDART00000123917">
    <property type="protein sequence ID" value="ENSDARP00000104833"/>
    <property type="gene ID" value="ENSDARG00000057322"/>
</dbReference>
<dbReference type="GeneID" id="406640"/>
<dbReference type="KEGG" id="dre:406640"/>
<dbReference type="AGR" id="ZFIN:ZDB-GENE-040426-2644"/>
<dbReference type="CTD" id="83604"/>
<dbReference type="ZFIN" id="ZDB-GENE-040426-2644">
    <property type="gene designation" value="tmem47"/>
</dbReference>
<dbReference type="eggNOG" id="KOG4671">
    <property type="taxonomic scope" value="Eukaryota"/>
</dbReference>
<dbReference type="HOGENOM" id="CLU_120054_1_0_1"/>
<dbReference type="InParanoid" id="Q6PFT6"/>
<dbReference type="OMA" id="FVETATM"/>
<dbReference type="OrthoDB" id="8655982at2759"/>
<dbReference type="PhylomeDB" id="Q6PFT6"/>
<dbReference type="TreeFam" id="TF312855"/>
<dbReference type="PRO" id="PR:Q6PFT6"/>
<dbReference type="Proteomes" id="UP000000437">
    <property type="component" value="Chromosome 8"/>
</dbReference>
<dbReference type="Bgee" id="ENSDARG00000057322">
    <property type="expression patterns" value="Expressed in swim bladder and 26 other cell types or tissues"/>
</dbReference>
<dbReference type="ExpressionAtlas" id="Q6PFT6">
    <property type="expression patterns" value="baseline and differential"/>
</dbReference>
<dbReference type="GO" id="GO:0005912">
    <property type="term" value="C:adherens junction"/>
    <property type="evidence" value="ECO:0007669"/>
    <property type="project" value="UniProtKB-SubCell"/>
</dbReference>
<dbReference type="GO" id="GO:0005911">
    <property type="term" value="C:cell-cell junction"/>
    <property type="evidence" value="ECO:0000318"/>
    <property type="project" value="GO_Central"/>
</dbReference>
<dbReference type="GO" id="GO:0016020">
    <property type="term" value="C:membrane"/>
    <property type="evidence" value="ECO:0007669"/>
    <property type="project" value="UniProtKB-SubCell"/>
</dbReference>
<dbReference type="GO" id="GO:0098609">
    <property type="term" value="P:cell-cell adhesion"/>
    <property type="evidence" value="ECO:0000318"/>
    <property type="project" value="GO_Central"/>
</dbReference>
<dbReference type="FunFam" id="1.20.140.150:FF:000010">
    <property type="entry name" value="transmembrane protein 47"/>
    <property type="match status" value="1"/>
</dbReference>
<dbReference type="Gene3D" id="1.20.140.150">
    <property type="match status" value="1"/>
</dbReference>
<dbReference type="InterPro" id="IPR015664">
    <property type="entry name" value="P53_induced"/>
</dbReference>
<dbReference type="InterPro" id="IPR004031">
    <property type="entry name" value="PMP22/EMP/MP20/Claudin"/>
</dbReference>
<dbReference type="PANTHER" id="PTHR14399">
    <property type="entry name" value="P53-INDUCED PROTEIN RELATED"/>
    <property type="match status" value="1"/>
</dbReference>
<dbReference type="PANTHER" id="PTHR14399:SF3">
    <property type="entry name" value="TRANSMEMBRANE PROTEIN 47"/>
    <property type="match status" value="1"/>
</dbReference>
<dbReference type="Pfam" id="PF00822">
    <property type="entry name" value="PMP22_Claudin"/>
    <property type="match status" value="1"/>
</dbReference>
<gene>
    <name type="primary">tmem47</name>
    <name type="synonym">tm4sf10</name>
    <name type="ORF">zgc:63990</name>
</gene>
<organism>
    <name type="scientific">Danio rerio</name>
    <name type="common">Zebrafish</name>
    <name type="synonym">Brachydanio rerio</name>
    <dbReference type="NCBI Taxonomy" id="7955"/>
    <lineage>
        <taxon>Eukaryota</taxon>
        <taxon>Metazoa</taxon>
        <taxon>Chordata</taxon>
        <taxon>Craniata</taxon>
        <taxon>Vertebrata</taxon>
        <taxon>Euteleostomi</taxon>
        <taxon>Actinopterygii</taxon>
        <taxon>Neopterygii</taxon>
        <taxon>Teleostei</taxon>
        <taxon>Ostariophysi</taxon>
        <taxon>Cypriniformes</taxon>
        <taxon>Danionidae</taxon>
        <taxon>Danioninae</taxon>
        <taxon>Danio</taxon>
    </lineage>
</organism>
<evidence type="ECO:0000250" key="1">
    <source>
        <dbReference type="UniProtKB" id="Q9JJG6"/>
    </source>
</evidence>
<evidence type="ECO:0000250" key="2">
    <source>
        <dbReference type="UniProtKB" id="Q9XSV3"/>
    </source>
</evidence>
<evidence type="ECO:0000255" key="3"/>
<evidence type="ECO:0000305" key="4"/>
<protein>
    <recommendedName>
        <fullName>Transmembrane protein 47</fullName>
    </recommendedName>
    <alternativeName>
        <fullName>Transmembrane 4 superfamily member 10</fullName>
    </alternativeName>
</protein>
<name>TMM47_DANRE</name>